<sequence length="474" mass="51183">MAGKTLYSKLWDIHEVARRDDGSSLIYIDRHILHEVTSPQAFEGLRLAGRPLWRVNANIATPDHNVPTTKAERQGSLLSIADTVSRLQVQTLDENCDDFGIFEFKMNDVRQGIVHVIGPEQGATLPGMTVVCGDSHTSTHGAFGALAHGIGTSEVEHVLATQCLVTQKMKNMQVRVEGTLPWGVTAKDIVLALIGKIGTAGGNGYAVEFSGSTIRALSMEGRMTICNMAIEAGARVGMVAVDEKTIQYVHGRPFAPKGSDWDAAVAFWRGLVSDPDAHFDRVVELSAEEIKPQVTWGTSPEMVSAVDQSVPDPERETDPVKKESLIRALKYMGLQPNDPITSIKLDRVFIGSCTNSRIEDLRAAAEVVKGRKVASTVKQAMVVPGSGLVKAQAEVEGLDKIFIEAGFEWREPGCSMCLAMNPDKLGSGEHCASTSNRNFEGRQGIGGRTHLVSPAMAAAAAVAGHFVDVREMMR</sequence>
<reference key="1">
    <citation type="journal article" date="2000" name="Nature">
        <title>The genome sequence of the plant pathogen Xylella fastidiosa.</title>
        <authorList>
            <person name="Simpson A.J.G."/>
            <person name="Reinach F.C."/>
            <person name="Arruda P."/>
            <person name="Abreu F.A."/>
            <person name="Acencio M."/>
            <person name="Alvarenga R."/>
            <person name="Alves L.M.C."/>
            <person name="Araya J.E."/>
            <person name="Baia G.S."/>
            <person name="Baptista C.S."/>
            <person name="Barros M.H."/>
            <person name="Bonaccorsi E.D."/>
            <person name="Bordin S."/>
            <person name="Bove J.M."/>
            <person name="Briones M.R.S."/>
            <person name="Bueno M.R.P."/>
            <person name="Camargo A.A."/>
            <person name="Camargo L.E.A."/>
            <person name="Carraro D.M."/>
            <person name="Carrer H."/>
            <person name="Colauto N.B."/>
            <person name="Colombo C."/>
            <person name="Costa F.F."/>
            <person name="Costa M.C.R."/>
            <person name="Costa-Neto C.M."/>
            <person name="Coutinho L.L."/>
            <person name="Cristofani M."/>
            <person name="Dias-Neto E."/>
            <person name="Docena C."/>
            <person name="El-Dorry H."/>
            <person name="Facincani A.P."/>
            <person name="Ferreira A.J.S."/>
            <person name="Ferreira V.C.A."/>
            <person name="Ferro J.A."/>
            <person name="Fraga J.S."/>
            <person name="Franca S.C."/>
            <person name="Franco M.C."/>
            <person name="Frohme M."/>
            <person name="Furlan L.R."/>
            <person name="Garnier M."/>
            <person name="Goldman G.H."/>
            <person name="Goldman M.H.S."/>
            <person name="Gomes S.L."/>
            <person name="Gruber A."/>
            <person name="Ho P.L."/>
            <person name="Hoheisel J.D."/>
            <person name="Junqueira M.L."/>
            <person name="Kemper E.L."/>
            <person name="Kitajima J.P."/>
            <person name="Krieger J.E."/>
            <person name="Kuramae E.E."/>
            <person name="Laigret F."/>
            <person name="Lambais M.R."/>
            <person name="Leite L.C.C."/>
            <person name="Lemos E.G.M."/>
            <person name="Lemos M.V.F."/>
            <person name="Lopes S.A."/>
            <person name="Lopes C.R."/>
            <person name="Machado J.A."/>
            <person name="Machado M.A."/>
            <person name="Madeira A.M.B.N."/>
            <person name="Madeira H.M.F."/>
            <person name="Marino C.L."/>
            <person name="Marques M.V."/>
            <person name="Martins E.A.L."/>
            <person name="Martins E.M.F."/>
            <person name="Matsukuma A.Y."/>
            <person name="Menck C.F.M."/>
            <person name="Miracca E.C."/>
            <person name="Miyaki C.Y."/>
            <person name="Monteiro-Vitorello C.B."/>
            <person name="Moon D.H."/>
            <person name="Nagai M.A."/>
            <person name="Nascimento A.L.T.O."/>
            <person name="Netto L.E.S."/>
            <person name="Nhani A. Jr."/>
            <person name="Nobrega F.G."/>
            <person name="Nunes L.R."/>
            <person name="Oliveira M.A."/>
            <person name="de Oliveira M.C."/>
            <person name="de Oliveira R.C."/>
            <person name="Palmieri D.A."/>
            <person name="Paris A."/>
            <person name="Peixoto B.R."/>
            <person name="Pereira G.A.G."/>
            <person name="Pereira H.A. Jr."/>
            <person name="Pesquero J.B."/>
            <person name="Quaggio R.B."/>
            <person name="Roberto P.G."/>
            <person name="Rodrigues V."/>
            <person name="de Rosa A.J.M."/>
            <person name="de Rosa V.E. Jr."/>
            <person name="de Sa R.G."/>
            <person name="Santelli R.V."/>
            <person name="Sawasaki H.E."/>
            <person name="da Silva A.C.R."/>
            <person name="da Silva A.M."/>
            <person name="da Silva F.R."/>
            <person name="Silva W.A. Jr."/>
            <person name="da Silveira J.F."/>
            <person name="Silvestri M.L.Z."/>
            <person name="Siqueira W.J."/>
            <person name="de Souza A.A."/>
            <person name="de Souza A.P."/>
            <person name="Terenzi M.F."/>
            <person name="Truffi D."/>
            <person name="Tsai S.M."/>
            <person name="Tsuhako M.H."/>
            <person name="Vallada H."/>
            <person name="Van Sluys M.A."/>
            <person name="Verjovski-Almeida S."/>
            <person name="Vettore A.L."/>
            <person name="Zago M.A."/>
            <person name="Zatz M."/>
            <person name="Meidanis J."/>
            <person name="Setubal J.C."/>
        </authorList>
    </citation>
    <scope>NUCLEOTIDE SEQUENCE [LARGE SCALE GENOMIC DNA]</scope>
    <source>
        <strain>9a5c</strain>
    </source>
</reference>
<evidence type="ECO:0000255" key="1">
    <source>
        <dbReference type="HAMAP-Rule" id="MF_01026"/>
    </source>
</evidence>
<proteinExistence type="inferred from homology"/>
<protein>
    <recommendedName>
        <fullName evidence="1">3-isopropylmalate dehydratase large subunit</fullName>
        <ecNumber evidence="1">4.2.1.33</ecNumber>
    </recommendedName>
    <alternativeName>
        <fullName evidence="1">Alpha-IPM isomerase</fullName>
        <shortName evidence="1">IPMI</shortName>
    </alternativeName>
    <alternativeName>
        <fullName evidence="1">Isopropylmalate isomerase</fullName>
    </alternativeName>
</protein>
<accession>Q9PAX0</accession>
<name>LEUC_XYLFA</name>
<dbReference type="EC" id="4.2.1.33" evidence="1"/>
<dbReference type="EMBL" id="AE003849">
    <property type="protein sequence ID" value="AAF85174.1"/>
    <property type="molecule type" value="Genomic_DNA"/>
</dbReference>
<dbReference type="PIR" id="H82564">
    <property type="entry name" value="H82564"/>
</dbReference>
<dbReference type="RefSeq" id="WP_010894821.1">
    <property type="nucleotide sequence ID" value="NC_002488.3"/>
</dbReference>
<dbReference type="SMR" id="Q9PAX0"/>
<dbReference type="STRING" id="160492.XF_2375"/>
<dbReference type="KEGG" id="xfa:XF_2375"/>
<dbReference type="PATRIC" id="fig|160492.11.peg.2525"/>
<dbReference type="eggNOG" id="COG0065">
    <property type="taxonomic scope" value="Bacteria"/>
</dbReference>
<dbReference type="HOGENOM" id="CLU_006714_3_4_6"/>
<dbReference type="UniPathway" id="UPA00048">
    <property type="reaction ID" value="UER00071"/>
</dbReference>
<dbReference type="Proteomes" id="UP000000812">
    <property type="component" value="Chromosome"/>
</dbReference>
<dbReference type="GO" id="GO:0003861">
    <property type="term" value="F:3-isopropylmalate dehydratase activity"/>
    <property type="evidence" value="ECO:0007669"/>
    <property type="project" value="UniProtKB-UniRule"/>
</dbReference>
<dbReference type="GO" id="GO:0051539">
    <property type="term" value="F:4 iron, 4 sulfur cluster binding"/>
    <property type="evidence" value="ECO:0007669"/>
    <property type="project" value="UniProtKB-KW"/>
</dbReference>
<dbReference type="GO" id="GO:0046872">
    <property type="term" value="F:metal ion binding"/>
    <property type="evidence" value="ECO:0007669"/>
    <property type="project" value="UniProtKB-KW"/>
</dbReference>
<dbReference type="GO" id="GO:0009098">
    <property type="term" value="P:L-leucine biosynthetic process"/>
    <property type="evidence" value="ECO:0007669"/>
    <property type="project" value="UniProtKB-UniRule"/>
</dbReference>
<dbReference type="CDD" id="cd01583">
    <property type="entry name" value="IPMI"/>
    <property type="match status" value="1"/>
</dbReference>
<dbReference type="FunFam" id="3.30.499.10:FF:000007">
    <property type="entry name" value="3-isopropylmalate dehydratase large subunit"/>
    <property type="match status" value="1"/>
</dbReference>
<dbReference type="Gene3D" id="3.30.499.10">
    <property type="entry name" value="Aconitase, domain 3"/>
    <property type="match status" value="2"/>
</dbReference>
<dbReference type="HAMAP" id="MF_01026">
    <property type="entry name" value="LeuC_type1"/>
    <property type="match status" value="1"/>
</dbReference>
<dbReference type="InterPro" id="IPR004430">
    <property type="entry name" value="3-IsopropMal_deHydase_lsu"/>
</dbReference>
<dbReference type="InterPro" id="IPR015931">
    <property type="entry name" value="Acnase/IPM_dHydase_lsu_aba_1/3"/>
</dbReference>
<dbReference type="InterPro" id="IPR001030">
    <property type="entry name" value="Acoase/IPM_deHydtase_lsu_aba"/>
</dbReference>
<dbReference type="InterPro" id="IPR018136">
    <property type="entry name" value="Aconitase_4Fe-4S_BS"/>
</dbReference>
<dbReference type="InterPro" id="IPR036008">
    <property type="entry name" value="Aconitase_4Fe-4S_dom"/>
</dbReference>
<dbReference type="InterPro" id="IPR050067">
    <property type="entry name" value="IPM_dehydratase_rel_enz"/>
</dbReference>
<dbReference type="InterPro" id="IPR033941">
    <property type="entry name" value="IPMI_cat"/>
</dbReference>
<dbReference type="NCBIfam" id="TIGR00170">
    <property type="entry name" value="leuC"/>
    <property type="match status" value="1"/>
</dbReference>
<dbReference type="NCBIfam" id="NF004016">
    <property type="entry name" value="PRK05478.1"/>
    <property type="match status" value="1"/>
</dbReference>
<dbReference type="NCBIfam" id="NF009116">
    <property type="entry name" value="PRK12466.1"/>
    <property type="match status" value="1"/>
</dbReference>
<dbReference type="PANTHER" id="PTHR43822:SF9">
    <property type="entry name" value="3-ISOPROPYLMALATE DEHYDRATASE"/>
    <property type="match status" value="1"/>
</dbReference>
<dbReference type="PANTHER" id="PTHR43822">
    <property type="entry name" value="HOMOACONITASE, MITOCHONDRIAL-RELATED"/>
    <property type="match status" value="1"/>
</dbReference>
<dbReference type="Pfam" id="PF00330">
    <property type="entry name" value="Aconitase"/>
    <property type="match status" value="1"/>
</dbReference>
<dbReference type="PRINTS" id="PR00415">
    <property type="entry name" value="ACONITASE"/>
</dbReference>
<dbReference type="SUPFAM" id="SSF53732">
    <property type="entry name" value="Aconitase iron-sulfur domain"/>
    <property type="match status" value="1"/>
</dbReference>
<dbReference type="PROSITE" id="PS00450">
    <property type="entry name" value="ACONITASE_1"/>
    <property type="match status" value="1"/>
</dbReference>
<dbReference type="PROSITE" id="PS01244">
    <property type="entry name" value="ACONITASE_2"/>
    <property type="match status" value="1"/>
</dbReference>
<organism>
    <name type="scientific">Xylella fastidiosa (strain 9a5c)</name>
    <dbReference type="NCBI Taxonomy" id="160492"/>
    <lineage>
        <taxon>Bacteria</taxon>
        <taxon>Pseudomonadati</taxon>
        <taxon>Pseudomonadota</taxon>
        <taxon>Gammaproteobacteria</taxon>
        <taxon>Lysobacterales</taxon>
        <taxon>Lysobacteraceae</taxon>
        <taxon>Xylella</taxon>
    </lineage>
</organism>
<keyword id="KW-0004">4Fe-4S</keyword>
<keyword id="KW-0028">Amino-acid biosynthesis</keyword>
<keyword id="KW-0100">Branched-chain amino acid biosynthesis</keyword>
<keyword id="KW-0408">Iron</keyword>
<keyword id="KW-0411">Iron-sulfur</keyword>
<keyword id="KW-0432">Leucine biosynthesis</keyword>
<keyword id="KW-0456">Lyase</keyword>
<keyword id="KW-0479">Metal-binding</keyword>
<feature type="chain" id="PRO_0000076846" description="3-isopropylmalate dehydratase large subunit">
    <location>
        <begin position="1"/>
        <end position="474"/>
    </location>
</feature>
<feature type="binding site" evidence="1">
    <location>
        <position position="353"/>
    </location>
    <ligand>
        <name>[4Fe-4S] cluster</name>
        <dbReference type="ChEBI" id="CHEBI:49883"/>
    </ligand>
</feature>
<feature type="binding site" evidence="1">
    <location>
        <position position="414"/>
    </location>
    <ligand>
        <name>[4Fe-4S] cluster</name>
        <dbReference type="ChEBI" id="CHEBI:49883"/>
    </ligand>
</feature>
<feature type="binding site" evidence="1">
    <location>
        <position position="417"/>
    </location>
    <ligand>
        <name>[4Fe-4S] cluster</name>
        <dbReference type="ChEBI" id="CHEBI:49883"/>
    </ligand>
</feature>
<comment type="function">
    <text evidence="1">Catalyzes the isomerization between 2-isopropylmalate and 3-isopropylmalate, via the formation of 2-isopropylmaleate.</text>
</comment>
<comment type="catalytic activity">
    <reaction evidence="1">
        <text>(2R,3S)-3-isopropylmalate = (2S)-2-isopropylmalate</text>
        <dbReference type="Rhea" id="RHEA:32287"/>
        <dbReference type="ChEBI" id="CHEBI:1178"/>
        <dbReference type="ChEBI" id="CHEBI:35121"/>
        <dbReference type="EC" id="4.2.1.33"/>
    </reaction>
</comment>
<comment type="cofactor">
    <cofactor evidence="1">
        <name>[4Fe-4S] cluster</name>
        <dbReference type="ChEBI" id="CHEBI:49883"/>
    </cofactor>
    <text evidence="1">Binds 1 [4Fe-4S] cluster per subunit.</text>
</comment>
<comment type="pathway">
    <text evidence="1">Amino-acid biosynthesis; L-leucine biosynthesis; L-leucine from 3-methyl-2-oxobutanoate: step 2/4.</text>
</comment>
<comment type="subunit">
    <text evidence="1">Heterodimer of LeuC and LeuD.</text>
</comment>
<comment type="similarity">
    <text evidence="1">Belongs to the aconitase/IPM isomerase family. LeuC type 1 subfamily.</text>
</comment>
<gene>
    <name evidence="1" type="primary">leuC</name>
    <name type="ordered locus">XF_2375</name>
</gene>